<name>LEUD_ACIB5</name>
<keyword id="KW-0028">Amino-acid biosynthesis</keyword>
<keyword id="KW-0100">Branched-chain amino acid biosynthesis</keyword>
<keyword id="KW-0432">Leucine biosynthesis</keyword>
<keyword id="KW-0456">Lyase</keyword>
<proteinExistence type="inferred from homology"/>
<sequence>MKAYTVEQGIVAPLDRANVDTDLIIPKQFLKSIKRTGFGDNLFDELRYLDEGYPGQDNSVRPKNPDFVLNQPRYQGATVLIARTNFGCGSSREHAPWALNEYGFRTVIAPSFADIFFNNCFKNGMLPVILPEDIVDQLFKECAAQEGYQLTIDLAAQEVRTPTGEAFKFEVDPFRKHCLLNGLDDIGLTLQNADAIRAYEEKTKQVRPWVFQEIN</sequence>
<protein>
    <recommendedName>
        <fullName evidence="1">3-isopropylmalate dehydratase small subunit</fullName>
        <ecNumber evidence="1">4.2.1.33</ecNumber>
    </recommendedName>
    <alternativeName>
        <fullName evidence="1">Alpha-IPM isomerase</fullName>
        <shortName evidence="1">IPMI</shortName>
    </alternativeName>
    <alternativeName>
        <fullName evidence="1">Isopropylmalate isomerase</fullName>
    </alternativeName>
</protein>
<evidence type="ECO:0000255" key="1">
    <source>
        <dbReference type="HAMAP-Rule" id="MF_01031"/>
    </source>
</evidence>
<reference key="1">
    <citation type="journal article" date="2008" name="J. Bacteriol.">
        <title>Comparative genome sequence analysis of multidrug-resistant Acinetobacter baumannii.</title>
        <authorList>
            <person name="Adams M.D."/>
            <person name="Goglin K."/>
            <person name="Molyneaux N."/>
            <person name="Hujer K.M."/>
            <person name="Lavender H."/>
            <person name="Jamison J.J."/>
            <person name="MacDonald I.J."/>
            <person name="Martin K.M."/>
            <person name="Russo T."/>
            <person name="Campagnari A.A."/>
            <person name="Hujer A.M."/>
            <person name="Bonomo R.A."/>
            <person name="Gill S.R."/>
        </authorList>
    </citation>
    <scope>NUCLEOTIDE SEQUENCE [LARGE SCALE GENOMIC DNA]</scope>
    <source>
        <strain>AB0057</strain>
    </source>
</reference>
<feature type="chain" id="PRO_1000135777" description="3-isopropylmalate dehydratase small subunit">
    <location>
        <begin position="1"/>
        <end position="215"/>
    </location>
</feature>
<comment type="function">
    <text evidence="1">Catalyzes the isomerization between 2-isopropylmalate and 3-isopropylmalate, via the formation of 2-isopropylmaleate.</text>
</comment>
<comment type="catalytic activity">
    <reaction evidence="1">
        <text>(2R,3S)-3-isopropylmalate = (2S)-2-isopropylmalate</text>
        <dbReference type="Rhea" id="RHEA:32287"/>
        <dbReference type="ChEBI" id="CHEBI:1178"/>
        <dbReference type="ChEBI" id="CHEBI:35121"/>
        <dbReference type="EC" id="4.2.1.33"/>
    </reaction>
</comment>
<comment type="pathway">
    <text evidence="1">Amino-acid biosynthesis; L-leucine biosynthesis; L-leucine from 3-methyl-2-oxobutanoate: step 2/4.</text>
</comment>
<comment type="subunit">
    <text evidence="1">Heterodimer of LeuC and LeuD.</text>
</comment>
<comment type="similarity">
    <text evidence="1">Belongs to the LeuD family. LeuD type 1 subfamily.</text>
</comment>
<dbReference type="EC" id="4.2.1.33" evidence="1"/>
<dbReference type="EMBL" id="CP001182">
    <property type="protein sequence ID" value="ACJ39917.1"/>
    <property type="molecule type" value="Genomic_DNA"/>
</dbReference>
<dbReference type="RefSeq" id="WP_000649450.1">
    <property type="nucleotide sequence ID" value="NC_011586.2"/>
</dbReference>
<dbReference type="SMR" id="B7I4E2"/>
<dbReference type="GeneID" id="92892410"/>
<dbReference type="KEGG" id="abn:AB57_0495"/>
<dbReference type="HOGENOM" id="CLU_081378_0_3_6"/>
<dbReference type="UniPathway" id="UPA00048">
    <property type="reaction ID" value="UER00071"/>
</dbReference>
<dbReference type="Proteomes" id="UP000007094">
    <property type="component" value="Chromosome"/>
</dbReference>
<dbReference type="GO" id="GO:0009316">
    <property type="term" value="C:3-isopropylmalate dehydratase complex"/>
    <property type="evidence" value="ECO:0007669"/>
    <property type="project" value="InterPro"/>
</dbReference>
<dbReference type="GO" id="GO:0003861">
    <property type="term" value="F:3-isopropylmalate dehydratase activity"/>
    <property type="evidence" value="ECO:0007669"/>
    <property type="project" value="UniProtKB-UniRule"/>
</dbReference>
<dbReference type="GO" id="GO:0009098">
    <property type="term" value="P:L-leucine biosynthetic process"/>
    <property type="evidence" value="ECO:0007669"/>
    <property type="project" value="UniProtKB-UniRule"/>
</dbReference>
<dbReference type="CDD" id="cd01577">
    <property type="entry name" value="IPMI_Swivel"/>
    <property type="match status" value="1"/>
</dbReference>
<dbReference type="FunFam" id="3.20.19.10:FF:000003">
    <property type="entry name" value="3-isopropylmalate dehydratase small subunit"/>
    <property type="match status" value="1"/>
</dbReference>
<dbReference type="Gene3D" id="3.20.19.10">
    <property type="entry name" value="Aconitase, domain 4"/>
    <property type="match status" value="1"/>
</dbReference>
<dbReference type="HAMAP" id="MF_01031">
    <property type="entry name" value="LeuD_type1"/>
    <property type="match status" value="1"/>
</dbReference>
<dbReference type="InterPro" id="IPR004431">
    <property type="entry name" value="3-IsopropMal_deHydase_ssu"/>
</dbReference>
<dbReference type="InterPro" id="IPR015928">
    <property type="entry name" value="Aconitase/3IPM_dehydase_swvl"/>
</dbReference>
<dbReference type="InterPro" id="IPR000573">
    <property type="entry name" value="AconitaseA/IPMdHydase_ssu_swvl"/>
</dbReference>
<dbReference type="InterPro" id="IPR033940">
    <property type="entry name" value="IPMI_Swivel"/>
</dbReference>
<dbReference type="InterPro" id="IPR050075">
    <property type="entry name" value="LeuD"/>
</dbReference>
<dbReference type="NCBIfam" id="TIGR00171">
    <property type="entry name" value="leuD"/>
    <property type="match status" value="1"/>
</dbReference>
<dbReference type="NCBIfam" id="NF002458">
    <property type="entry name" value="PRK01641.1"/>
    <property type="match status" value="1"/>
</dbReference>
<dbReference type="PANTHER" id="PTHR43345:SF5">
    <property type="entry name" value="3-ISOPROPYLMALATE DEHYDRATASE SMALL SUBUNIT"/>
    <property type="match status" value="1"/>
</dbReference>
<dbReference type="PANTHER" id="PTHR43345">
    <property type="entry name" value="3-ISOPROPYLMALATE DEHYDRATASE SMALL SUBUNIT 2-RELATED-RELATED"/>
    <property type="match status" value="1"/>
</dbReference>
<dbReference type="Pfam" id="PF00694">
    <property type="entry name" value="Aconitase_C"/>
    <property type="match status" value="1"/>
</dbReference>
<dbReference type="SUPFAM" id="SSF52016">
    <property type="entry name" value="LeuD/IlvD-like"/>
    <property type="match status" value="1"/>
</dbReference>
<accession>B7I4E2</accession>
<gene>
    <name evidence="1" type="primary">leuD</name>
    <name type="ordered locus">AB57_0495</name>
</gene>
<organism>
    <name type="scientific">Acinetobacter baumannii (strain AB0057)</name>
    <dbReference type="NCBI Taxonomy" id="480119"/>
    <lineage>
        <taxon>Bacteria</taxon>
        <taxon>Pseudomonadati</taxon>
        <taxon>Pseudomonadota</taxon>
        <taxon>Gammaproteobacteria</taxon>
        <taxon>Moraxellales</taxon>
        <taxon>Moraxellaceae</taxon>
        <taxon>Acinetobacter</taxon>
        <taxon>Acinetobacter calcoaceticus/baumannii complex</taxon>
    </lineage>
</organism>